<name>MIAA_ECO55</name>
<accession>B7LC30</accession>
<protein>
    <recommendedName>
        <fullName evidence="1">tRNA dimethylallyltransferase</fullName>
        <ecNumber evidence="1">2.5.1.75</ecNumber>
    </recommendedName>
    <alternativeName>
        <fullName evidence="1">Dimethylallyl diphosphate:tRNA dimethylallyltransferase</fullName>
        <shortName evidence="1">DMAPP:tRNA dimethylallyltransferase</shortName>
        <shortName evidence="1">DMATase</shortName>
    </alternativeName>
    <alternativeName>
        <fullName evidence="1">Isopentenyl-diphosphate:tRNA isopentenyltransferase</fullName>
        <shortName evidence="1">IPP transferase</shortName>
        <shortName evidence="1">IPPT</shortName>
        <shortName evidence="1">IPTase</shortName>
    </alternativeName>
</protein>
<sequence>MSDISKASLPKAIFLMGPTASGKTALAIELRKILPVELISVDSALIYKGMDIGTAKPNAEELLAAPHRLLDIRDPSQAYSAADFRRDALAEMADITAAGRIPLLVGGTMLYFKALLEGLSPLPSADPEVRARIEQQAAEQGWESLHRQLQEVDPVAAARIHPNDPQRLSRALEVFFISGKTLTELTQTSGDALPYQVHQFAIAPASRELLHQRIEQRFHQMLASGFEAEVRALFARGDLHTDLPSIRCVGYRQMWSYLEGEISYDEMVYRGVCATRQLAKRQITWLRGWEGVHWLDSEKPEQARDEVLQVVGAIAG</sequence>
<keyword id="KW-0067">ATP-binding</keyword>
<keyword id="KW-0460">Magnesium</keyword>
<keyword id="KW-0547">Nucleotide-binding</keyword>
<keyword id="KW-1185">Reference proteome</keyword>
<keyword id="KW-0808">Transferase</keyword>
<keyword id="KW-0819">tRNA processing</keyword>
<reference key="1">
    <citation type="journal article" date="2009" name="PLoS Genet.">
        <title>Organised genome dynamics in the Escherichia coli species results in highly diverse adaptive paths.</title>
        <authorList>
            <person name="Touchon M."/>
            <person name="Hoede C."/>
            <person name="Tenaillon O."/>
            <person name="Barbe V."/>
            <person name="Baeriswyl S."/>
            <person name="Bidet P."/>
            <person name="Bingen E."/>
            <person name="Bonacorsi S."/>
            <person name="Bouchier C."/>
            <person name="Bouvet O."/>
            <person name="Calteau A."/>
            <person name="Chiapello H."/>
            <person name="Clermont O."/>
            <person name="Cruveiller S."/>
            <person name="Danchin A."/>
            <person name="Diard M."/>
            <person name="Dossat C."/>
            <person name="Karoui M.E."/>
            <person name="Frapy E."/>
            <person name="Garry L."/>
            <person name="Ghigo J.M."/>
            <person name="Gilles A.M."/>
            <person name="Johnson J."/>
            <person name="Le Bouguenec C."/>
            <person name="Lescat M."/>
            <person name="Mangenot S."/>
            <person name="Martinez-Jehanne V."/>
            <person name="Matic I."/>
            <person name="Nassif X."/>
            <person name="Oztas S."/>
            <person name="Petit M.A."/>
            <person name="Pichon C."/>
            <person name="Rouy Z."/>
            <person name="Ruf C.S."/>
            <person name="Schneider D."/>
            <person name="Tourret J."/>
            <person name="Vacherie B."/>
            <person name="Vallenet D."/>
            <person name="Medigue C."/>
            <person name="Rocha E.P.C."/>
            <person name="Denamur E."/>
        </authorList>
    </citation>
    <scope>NUCLEOTIDE SEQUENCE [LARGE SCALE GENOMIC DNA]</scope>
    <source>
        <strain>55989 / EAEC</strain>
    </source>
</reference>
<dbReference type="EC" id="2.5.1.75" evidence="1"/>
<dbReference type="EMBL" id="CU928145">
    <property type="protein sequence ID" value="CAV01642.1"/>
    <property type="molecule type" value="Genomic_DNA"/>
</dbReference>
<dbReference type="RefSeq" id="WP_001280345.1">
    <property type="nucleotide sequence ID" value="NC_011748.1"/>
</dbReference>
<dbReference type="SMR" id="B7LC30"/>
<dbReference type="GeneID" id="93777650"/>
<dbReference type="KEGG" id="eck:EC55989_4726"/>
<dbReference type="HOGENOM" id="CLU_032616_0_0_6"/>
<dbReference type="Proteomes" id="UP000000746">
    <property type="component" value="Chromosome"/>
</dbReference>
<dbReference type="GO" id="GO:0005524">
    <property type="term" value="F:ATP binding"/>
    <property type="evidence" value="ECO:0007669"/>
    <property type="project" value="UniProtKB-UniRule"/>
</dbReference>
<dbReference type="GO" id="GO:0052381">
    <property type="term" value="F:tRNA dimethylallyltransferase activity"/>
    <property type="evidence" value="ECO:0007669"/>
    <property type="project" value="UniProtKB-UniRule"/>
</dbReference>
<dbReference type="GO" id="GO:0006400">
    <property type="term" value="P:tRNA modification"/>
    <property type="evidence" value="ECO:0007669"/>
    <property type="project" value="TreeGrafter"/>
</dbReference>
<dbReference type="FunFam" id="1.10.20.140:FF:000001">
    <property type="entry name" value="tRNA dimethylallyltransferase"/>
    <property type="match status" value="1"/>
</dbReference>
<dbReference type="FunFam" id="1.10.287.890:FF:000001">
    <property type="entry name" value="tRNA dimethylallyltransferase"/>
    <property type="match status" value="1"/>
</dbReference>
<dbReference type="Gene3D" id="1.10.20.140">
    <property type="match status" value="1"/>
</dbReference>
<dbReference type="Gene3D" id="1.10.287.890">
    <property type="entry name" value="Crystal structure of tRNA isopentenylpyrophosphate transferase (bh2366) domain"/>
    <property type="match status" value="1"/>
</dbReference>
<dbReference type="Gene3D" id="3.40.50.300">
    <property type="entry name" value="P-loop containing nucleotide triphosphate hydrolases"/>
    <property type="match status" value="1"/>
</dbReference>
<dbReference type="HAMAP" id="MF_00185">
    <property type="entry name" value="IPP_trans"/>
    <property type="match status" value="1"/>
</dbReference>
<dbReference type="InterPro" id="IPR039657">
    <property type="entry name" value="Dimethylallyltransferase"/>
</dbReference>
<dbReference type="InterPro" id="IPR018022">
    <property type="entry name" value="IPT"/>
</dbReference>
<dbReference type="InterPro" id="IPR027417">
    <property type="entry name" value="P-loop_NTPase"/>
</dbReference>
<dbReference type="NCBIfam" id="TIGR00174">
    <property type="entry name" value="miaA"/>
    <property type="match status" value="1"/>
</dbReference>
<dbReference type="PANTHER" id="PTHR11088">
    <property type="entry name" value="TRNA DIMETHYLALLYLTRANSFERASE"/>
    <property type="match status" value="1"/>
</dbReference>
<dbReference type="PANTHER" id="PTHR11088:SF60">
    <property type="entry name" value="TRNA DIMETHYLALLYLTRANSFERASE"/>
    <property type="match status" value="1"/>
</dbReference>
<dbReference type="Pfam" id="PF01715">
    <property type="entry name" value="IPPT"/>
    <property type="match status" value="1"/>
</dbReference>
<dbReference type="SUPFAM" id="SSF52540">
    <property type="entry name" value="P-loop containing nucleoside triphosphate hydrolases"/>
    <property type="match status" value="1"/>
</dbReference>
<comment type="function">
    <text evidence="1">Catalyzes the transfer of a dimethylallyl group onto the adenine at position 37 in tRNAs that read codons beginning with uridine, leading to the formation of N6-(dimethylallyl)adenosine (i(6)A).</text>
</comment>
<comment type="catalytic activity">
    <reaction evidence="1">
        <text>adenosine(37) in tRNA + dimethylallyl diphosphate = N(6)-dimethylallyladenosine(37) in tRNA + diphosphate</text>
        <dbReference type="Rhea" id="RHEA:26482"/>
        <dbReference type="Rhea" id="RHEA-COMP:10162"/>
        <dbReference type="Rhea" id="RHEA-COMP:10375"/>
        <dbReference type="ChEBI" id="CHEBI:33019"/>
        <dbReference type="ChEBI" id="CHEBI:57623"/>
        <dbReference type="ChEBI" id="CHEBI:74411"/>
        <dbReference type="ChEBI" id="CHEBI:74415"/>
        <dbReference type="EC" id="2.5.1.75"/>
    </reaction>
</comment>
<comment type="cofactor">
    <cofactor evidence="1">
        <name>Mg(2+)</name>
        <dbReference type="ChEBI" id="CHEBI:18420"/>
    </cofactor>
</comment>
<comment type="subunit">
    <text evidence="1">Monomer.</text>
</comment>
<comment type="similarity">
    <text evidence="1">Belongs to the IPP transferase family.</text>
</comment>
<organism>
    <name type="scientific">Escherichia coli (strain 55989 / EAEC)</name>
    <dbReference type="NCBI Taxonomy" id="585055"/>
    <lineage>
        <taxon>Bacteria</taxon>
        <taxon>Pseudomonadati</taxon>
        <taxon>Pseudomonadota</taxon>
        <taxon>Gammaproteobacteria</taxon>
        <taxon>Enterobacterales</taxon>
        <taxon>Enterobacteriaceae</taxon>
        <taxon>Escherichia</taxon>
    </lineage>
</organism>
<evidence type="ECO:0000255" key="1">
    <source>
        <dbReference type="HAMAP-Rule" id="MF_00185"/>
    </source>
</evidence>
<gene>
    <name evidence="1" type="primary">miaA</name>
    <name type="ordered locus">EC55989_4726</name>
</gene>
<feature type="chain" id="PRO_0000377157" description="tRNA dimethylallyltransferase">
    <location>
        <begin position="1"/>
        <end position="316"/>
    </location>
</feature>
<feature type="region of interest" description="Interaction with substrate tRNA" evidence="1">
    <location>
        <begin position="42"/>
        <end position="45"/>
    </location>
</feature>
<feature type="region of interest" description="Interaction with substrate tRNA" evidence="1">
    <location>
        <begin position="166"/>
        <end position="170"/>
    </location>
</feature>
<feature type="region of interest" description="Interaction with substrate tRNA" evidence="1">
    <location>
        <begin position="247"/>
        <end position="252"/>
    </location>
</feature>
<feature type="region of interest" description="Interaction with substrate tRNA" evidence="1">
    <location>
        <begin position="280"/>
        <end position="287"/>
    </location>
</feature>
<feature type="binding site" evidence="1">
    <location>
        <begin position="17"/>
        <end position="24"/>
    </location>
    <ligand>
        <name>ATP</name>
        <dbReference type="ChEBI" id="CHEBI:30616"/>
    </ligand>
</feature>
<feature type="binding site" evidence="1">
    <location>
        <begin position="19"/>
        <end position="24"/>
    </location>
    <ligand>
        <name>substrate</name>
    </ligand>
</feature>
<feature type="site" description="Interaction with substrate tRNA" evidence="1">
    <location>
        <position position="108"/>
    </location>
</feature>
<feature type="site" description="Interaction with substrate tRNA" evidence="1">
    <location>
        <position position="130"/>
    </location>
</feature>
<proteinExistence type="inferred from homology"/>